<organism>
    <name type="scientific">Mus musculus</name>
    <name type="common">Mouse</name>
    <dbReference type="NCBI Taxonomy" id="10090"/>
    <lineage>
        <taxon>Eukaryota</taxon>
        <taxon>Metazoa</taxon>
        <taxon>Chordata</taxon>
        <taxon>Craniata</taxon>
        <taxon>Vertebrata</taxon>
        <taxon>Euteleostomi</taxon>
        <taxon>Mammalia</taxon>
        <taxon>Eutheria</taxon>
        <taxon>Euarchontoglires</taxon>
        <taxon>Glires</taxon>
        <taxon>Rodentia</taxon>
        <taxon>Myomorpha</taxon>
        <taxon>Muroidea</taxon>
        <taxon>Muridae</taxon>
        <taxon>Murinae</taxon>
        <taxon>Mus</taxon>
        <taxon>Mus</taxon>
    </lineage>
</organism>
<accession>Q19LI2</accession>
<protein>
    <recommendedName>
        <fullName>Alpha-1B-glycoprotein</fullName>
    </recommendedName>
    <alternativeName>
        <fullName>Alpha-1-B glycoprotein</fullName>
    </alternativeName>
</protein>
<name>A1BG_MOUSE</name>
<proteinExistence type="evidence at protein level"/>
<gene>
    <name type="primary">A1bg</name>
</gene>
<dbReference type="EMBL" id="DQ520794">
    <property type="protein sequence ID" value="ABF68843.1"/>
    <property type="molecule type" value="mRNA"/>
</dbReference>
<dbReference type="EMBL" id="CH466545">
    <property type="protein sequence ID" value="EDL29338.1"/>
    <property type="molecule type" value="Genomic_DNA"/>
</dbReference>
<dbReference type="CCDS" id="CCDS37085.1"/>
<dbReference type="RefSeq" id="NP_001074536.1">
    <property type="nucleotide sequence ID" value="NM_001081067.1"/>
</dbReference>
<dbReference type="SMR" id="Q19LI2"/>
<dbReference type="FunCoup" id="Q19LI2">
    <property type="interactions" value="110"/>
</dbReference>
<dbReference type="STRING" id="10090.ENSMUSP00000094151"/>
<dbReference type="GlyCosmos" id="Q19LI2">
    <property type="glycosylation" value="7 sites, No reported glycans"/>
</dbReference>
<dbReference type="GlyGen" id="Q19LI2">
    <property type="glycosylation" value="8 sites, 2 N-linked glycans (2 sites), 1 O-linked glycan (1 site)"/>
</dbReference>
<dbReference type="iPTMnet" id="Q19LI2"/>
<dbReference type="PhosphoSitePlus" id="Q19LI2"/>
<dbReference type="SwissPalm" id="Q19LI2"/>
<dbReference type="CPTAC" id="non-CPTAC-3518"/>
<dbReference type="jPOST" id="Q19LI2"/>
<dbReference type="PaxDb" id="10090-ENSMUSP00000094151"/>
<dbReference type="PeptideAtlas" id="Q19LI2"/>
<dbReference type="ProteomicsDB" id="285743"/>
<dbReference type="Antibodypedia" id="3284">
    <property type="antibodies" value="435 antibodies from 37 providers"/>
</dbReference>
<dbReference type="DNASU" id="117586"/>
<dbReference type="Ensembl" id="ENSMUST00000096418.5">
    <property type="protein sequence ID" value="ENSMUSP00000094151.4"/>
    <property type="gene ID" value="ENSMUSG00000022347.9"/>
</dbReference>
<dbReference type="GeneID" id="117586"/>
<dbReference type="KEGG" id="mmu:117586"/>
<dbReference type="UCSC" id="uc007vyd.1">
    <property type="organism name" value="mouse"/>
</dbReference>
<dbReference type="AGR" id="MGI:2152878"/>
<dbReference type="CTD" id="1"/>
<dbReference type="MGI" id="MGI:2152878">
    <property type="gene designation" value="A1bg"/>
</dbReference>
<dbReference type="VEuPathDB" id="HostDB:ENSMUSG00000022347"/>
<dbReference type="eggNOG" id="ENOG502RYEX">
    <property type="taxonomic scope" value="Eukaryota"/>
</dbReference>
<dbReference type="GeneTree" id="ENSGT01130000278334"/>
<dbReference type="HOGENOM" id="CLU_042929_1_0_1"/>
<dbReference type="InParanoid" id="Q19LI2"/>
<dbReference type="OMA" id="FWGLPMG"/>
<dbReference type="OrthoDB" id="9450204at2759"/>
<dbReference type="PhylomeDB" id="Q19LI2"/>
<dbReference type="TreeFam" id="TF336644"/>
<dbReference type="Reactome" id="R-MMU-114608">
    <property type="pathway name" value="Platelet degranulation"/>
</dbReference>
<dbReference type="Reactome" id="R-MMU-6798695">
    <property type="pathway name" value="Neutrophil degranulation"/>
</dbReference>
<dbReference type="BioGRID-ORCS" id="117586">
    <property type="hits" value="3 hits in 78 CRISPR screens"/>
</dbReference>
<dbReference type="ChiTaRS" id="A1bg">
    <property type="organism name" value="mouse"/>
</dbReference>
<dbReference type="PRO" id="PR:Q19LI2"/>
<dbReference type="Proteomes" id="UP000000589">
    <property type="component" value="Chromosome 15"/>
</dbReference>
<dbReference type="RNAct" id="Q19LI2">
    <property type="molecule type" value="protein"/>
</dbReference>
<dbReference type="Bgee" id="ENSMUSG00000022347">
    <property type="expression patterns" value="Expressed in primary oocyte and 19 other cell types or tissues"/>
</dbReference>
<dbReference type="ExpressionAtlas" id="Q19LI2">
    <property type="expression patterns" value="baseline and differential"/>
</dbReference>
<dbReference type="GO" id="GO:0005576">
    <property type="term" value="C:extracellular region"/>
    <property type="evidence" value="ECO:0007669"/>
    <property type="project" value="UniProtKB-SubCell"/>
</dbReference>
<dbReference type="GO" id="GO:0060396">
    <property type="term" value="P:growth hormone receptor signaling pathway"/>
    <property type="evidence" value="ECO:0000315"/>
    <property type="project" value="MGI"/>
</dbReference>
<dbReference type="FunFam" id="2.60.40.10:FF:000033">
    <property type="entry name" value="Killer cell immunoglobulin-like receptor"/>
    <property type="match status" value="2"/>
</dbReference>
<dbReference type="FunFam" id="2.60.40.10:FF:000049">
    <property type="entry name" value="Leukocyte immunoglobulin-like receptor subfamily B member 1"/>
    <property type="match status" value="1"/>
</dbReference>
<dbReference type="Gene3D" id="2.60.40.10">
    <property type="entry name" value="Immunoglobulins"/>
    <property type="match status" value="5"/>
</dbReference>
<dbReference type="InterPro" id="IPR016332">
    <property type="entry name" value="A1B_glyco/leuk_Ig-like_rcpt"/>
</dbReference>
<dbReference type="InterPro" id="IPR007110">
    <property type="entry name" value="Ig-like_dom"/>
</dbReference>
<dbReference type="InterPro" id="IPR036179">
    <property type="entry name" value="Ig-like_dom_sf"/>
</dbReference>
<dbReference type="InterPro" id="IPR013783">
    <property type="entry name" value="Ig-like_fold"/>
</dbReference>
<dbReference type="InterPro" id="IPR050412">
    <property type="entry name" value="Ig-like_Receptors_ImmuneReg"/>
</dbReference>
<dbReference type="InterPro" id="IPR003599">
    <property type="entry name" value="Ig_sub"/>
</dbReference>
<dbReference type="PANTHER" id="PTHR11738:SF184">
    <property type="entry name" value="ALPHA-1B-GLYCOPROTEIN"/>
    <property type="match status" value="1"/>
</dbReference>
<dbReference type="PANTHER" id="PTHR11738">
    <property type="entry name" value="MHC CLASS I NK CELL RECEPTOR"/>
    <property type="match status" value="1"/>
</dbReference>
<dbReference type="Pfam" id="PF13895">
    <property type="entry name" value="Ig_2"/>
    <property type="match status" value="2"/>
</dbReference>
<dbReference type="PIRSF" id="PIRSF001979">
    <property type="entry name" value="Alpha_1B_glycoprot_prd"/>
    <property type="match status" value="1"/>
</dbReference>
<dbReference type="SMART" id="SM00409">
    <property type="entry name" value="IG"/>
    <property type="match status" value="3"/>
</dbReference>
<dbReference type="SUPFAM" id="SSF48726">
    <property type="entry name" value="Immunoglobulin"/>
    <property type="match status" value="4"/>
</dbReference>
<dbReference type="PROSITE" id="PS50835">
    <property type="entry name" value="IG_LIKE"/>
    <property type="match status" value="2"/>
</dbReference>
<feature type="signal peptide" evidence="2">
    <location>
        <begin position="1"/>
        <end position="18"/>
    </location>
</feature>
<feature type="chain" id="PRO_0000355542" description="Alpha-1B-glycoprotein">
    <location>
        <begin position="19"/>
        <end position="512"/>
    </location>
</feature>
<feature type="domain" description="Ig-like V-type 1">
    <location>
        <begin position="22"/>
        <end position="126"/>
    </location>
</feature>
<feature type="domain" description="Ig-like V-type 2">
    <location>
        <begin position="127"/>
        <end position="219"/>
    </location>
</feature>
<feature type="domain" description="Ig-like V-type 3">
    <location>
        <begin position="220"/>
        <end position="312"/>
    </location>
</feature>
<feature type="domain" description="Ig-like V-type 4">
    <location>
        <begin position="313"/>
        <end position="415"/>
    </location>
</feature>
<feature type="domain" description="Ig-like V-type 5">
    <location>
        <begin position="416"/>
        <end position="512"/>
    </location>
</feature>
<feature type="glycosylation site" description="N-linked (GlcNAc...) asparagine" evidence="2">
    <location>
        <position position="44"/>
    </location>
</feature>
<feature type="glycosylation site" description="N-linked (GlcNAc...) asparagine" evidence="5">
    <location>
        <position position="89"/>
    </location>
</feature>
<feature type="glycosylation site" description="N-linked (GlcNAc...) asparagine" evidence="2">
    <location>
        <position position="192"/>
    </location>
</feature>
<feature type="glycosylation site" description="N-linked (GlcNAc...) asparagine" evidence="2">
    <location>
        <position position="369"/>
    </location>
</feature>
<feature type="glycosylation site" description="N-linked (GlcNAc...) asparagine" evidence="2">
    <location>
        <position position="381"/>
    </location>
</feature>
<feature type="glycosylation site" description="N-linked (GlcNAc...) asparagine" evidence="2">
    <location>
        <position position="389"/>
    </location>
</feature>
<feature type="glycosylation site" description="N-linked (GlcNAc...) asparagine" evidence="5">
    <location>
        <position position="485"/>
    </location>
</feature>
<feature type="disulfide bond" evidence="3">
    <location>
        <begin position="49"/>
        <end position="96"/>
    </location>
</feature>
<feature type="disulfide bond" evidence="3">
    <location>
        <begin position="153"/>
        <end position="195"/>
    </location>
</feature>
<feature type="disulfide bond" evidence="3">
    <location>
        <begin position="245"/>
        <end position="292"/>
    </location>
</feature>
<feature type="disulfide bond" evidence="3">
    <location>
        <begin position="343"/>
        <end position="392"/>
    </location>
</feature>
<feature type="disulfide bond" evidence="3">
    <location>
        <begin position="441"/>
        <end position="488"/>
    </location>
</feature>
<comment type="subunit">
    <text evidence="1">Interacts with CRISP3.</text>
</comment>
<comment type="subcellular location">
    <subcellularLocation>
        <location evidence="1">Secreted</location>
    </subcellularLocation>
</comment>
<comment type="tissue specificity">
    <text evidence="4">Expressed in the liver hepatocytes of male and female GH transgenic mice and in the liver of female, but not of male, non-transgenic mice.</text>
</comment>
<comment type="developmental stage">
    <text evidence="4">Expressed at 3-days but not at 11-days of age in both female and male GH transgenic mice. Expression in the normal female mice begins as early as 2 months and is detected at much higher levels at 5, 12 and 24 months while at 30 months, expression is lower.</text>
</comment>
<comment type="induction">
    <text evidence="4">Induced in hepatocytes during the proliferative phase of liver regeneration. Induction requires a continuous pattern of GH (growth hormaone) secretion and an intact GH-GH receptor-signaling complex.</text>
</comment>
<sequence>MSLLATVLLLWGFTLGPGNTLMLDSGSEPKLWAEPQSLLEPWANLTLVCAVDLPTKVFELIQNGWFLSQVRLETQVLSYRFSLGAITSNNSGIYRCRCGVEPPVDIHLPALNKWTMLSNAVEVTGKEPLPRPLAHADPVDWITPGGLPVYVMCQVAMRGVTYLLRQEGVDGVQKPDVQHKGTAGFLIYKPGNYSCSYLTHAAGEPSEPSDIVTIKMYASQAPPTLCLMGNYLMIYPQKTYETLACKAPRNAAEFQLRQGGKVLKIHGFSPTRDAILYYVNLKELDNPGPFTCRYRMHKYMHVWSEDSKPVELMWSDETLQAPVLTAEPSSRDLEPGSTVQLRCTAPVSGLRFGLQRQGKPELVVVQMLNSSGTEAVFELHNISTIDSGNYSCIYMEQAPPFSGSSSSEPVELRVNGPPPKPRLEALWKSTVHLGQEAIFRCHGHVPRVSMELVREGFKTPFAVASTRSTSAYLKLLFVGPQHAGNYSCRYTALPPFTFESGISDPVEVIVEG</sequence>
<keyword id="KW-1015">Disulfide bond</keyword>
<keyword id="KW-0325">Glycoprotein</keyword>
<keyword id="KW-0393">Immunoglobulin domain</keyword>
<keyword id="KW-1185">Reference proteome</keyword>
<keyword id="KW-0677">Repeat</keyword>
<keyword id="KW-0964">Secreted</keyword>
<keyword id="KW-0732">Signal</keyword>
<reference key="1">
    <citation type="journal article" date="2006" name="Growth Horm. IGF Res.">
        <title>A liver specific gene that is expressed in growth hormone transgenic mice and in normal female mice as a function of age.</title>
        <authorList>
            <person name="Tiong J.D.R."/>
            <person name="Gosney E."/>
            <person name="Ding J."/>
            <person name="Chin E."/>
            <person name="Kopchick J.J."/>
        </authorList>
    </citation>
    <scope>NUCLEOTIDE SEQUENCE [MRNA]</scope>
    <scope>INDUCTION</scope>
    <scope>TISSUE SPECIFICITY</scope>
    <scope>DEVELOPMENTAL STAGE</scope>
    <source>
        <strain>BALB/cJ</strain>
        <tissue>Liver</tissue>
    </source>
</reference>
<reference key="2">
    <citation type="submission" date="2005-07" db="EMBL/GenBank/DDBJ databases">
        <authorList>
            <person name="Mural R.J."/>
            <person name="Adams M.D."/>
            <person name="Myers E.W."/>
            <person name="Smith H.O."/>
            <person name="Venter J.C."/>
        </authorList>
    </citation>
    <scope>NUCLEOTIDE SEQUENCE [LARGE SCALE GENOMIC DNA]</scope>
</reference>
<reference key="3">
    <citation type="journal article" date="2007" name="J. Proteome Res.">
        <title>Enhanced analysis of the mouse plasma proteome using cysteine-containing tryptic glycopeptides.</title>
        <authorList>
            <person name="Bernhard O.K."/>
            <person name="Kapp E.A."/>
            <person name="Simpson R.J."/>
        </authorList>
    </citation>
    <scope>GLYCOSYLATION [LARGE SCALE ANALYSIS] AT ASN-89 AND ASN-485</scope>
    <source>
        <strain>C57BL/6J</strain>
        <tissue>Plasma</tissue>
    </source>
</reference>
<reference key="4">
    <citation type="journal article" date="2010" name="Cell">
        <title>A tissue-specific atlas of mouse protein phosphorylation and expression.</title>
        <authorList>
            <person name="Huttlin E.L."/>
            <person name="Jedrychowski M.P."/>
            <person name="Elias J.E."/>
            <person name="Goswami T."/>
            <person name="Rad R."/>
            <person name="Beausoleil S.A."/>
            <person name="Villen J."/>
            <person name="Haas W."/>
            <person name="Sowa M.E."/>
            <person name="Gygi S.P."/>
        </authorList>
    </citation>
    <scope>IDENTIFICATION BY MASS SPECTROMETRY [LARGE SCALE ANALYSIS]</scope>
    <source>
        <tissue>Lung</tissue>
    </source>
</reference>
<evidence type="ECO:0000250" key="1"/>
<evidence type="ECO:0000255" key="2"/>
<evidence type="ECO:0000255" key="3">
    <source>
        <dbReference type="PROSITE-ProRule" id="PRU00114"/>
    </source>
</evidence>
<evidence type="ECO:0000269" key="4">
    <source>
    </source>
</evidence>
<evidence type="ECO:0000269" key="5">
    <source>
    </source>
</evidence>